<protein>
    <recommendedName>
        <fullName evidence="1">Flagellar transcriptional regulator FlhD</fullName>
    </recommendedName>
</protein>
<feature type="chain" id="PRO_0000182719" description="Flagellar transcriptional regulator FlhD">
    <location>
        <begin position="1"/>
        <end position="105"/>
    </location>
</feature>
<feature type="disulfide bond" description="Interchain" evidence="1">
    <location>
        <position position="65"/>
    </location>
</feature>
<organism>
    <name type="scientific">Nitrosomonas europaea (strain ATCC 19718 / CIP 103999 / KCTC 2705 / NBRC 14298)</name>
    <dbReference type="NCBI Taxonomy" id="228410"/>
    <lineage>
        <taxon>Bacteria</taxon>
        <taxon>Pseudomonadati</taxon>
        <taxon>Pseudomonadota</taxon>
        <taxon>Betaproteobacteria</taxon>
        <taxon>Nitrosomonadales</taxon>
        <taxon>Nitrosomonadaceae</taxon>
        <taxon>Nitrosomonas</taxon>
    </lineage>
</organism>
<name>FLHD_NITEU</name>
<reference key="1">
    <citation type="journal article" date="2003" name="J. Bacteriol.">
        <title>Complete genome sequence of the ammonia-oxidizing bacterium and obligate chemolithoautotroph Nitrosomonas europaea.</title>
        <authorList>
            <person name="Chain P."/>
            <person name="Lamerdin J.E."/>
            <person name="Larimer F.W."/>
            <person name="Regala W."/>
            <person name="Lao V."/>
            <person name="Land M.L."/>
            <person name="Hauser L."/>
            <person name="Hooper A.B."/>
            <person name="Klotz M.G."/>
            <person name="Norton J."/>
            <person name="Sayavedra-Soto L.A."/>
            <person name="Arciero D.M."/>
            <person name="Hommes N.G."/>
            <person name="Whittaker M.M."/>
            <person name="Arp D.J."/>
        </authorList>
    </citation>
    <scope>NUCLEOTIDE SEQUENCE [LARGE SCALE GENOMIC DNA]</scope>
    <source>
        <strain>ATCC 19718 / CIP 103999 / KCTC 2705 / NBRC 14298</strain>
    </source>
</reference>
<dbReference type="EMBL" id="AL954747">
    <property type="protein sequence ID" value="CAD86319.1"/>
    <property type="molecule type" value="Genomic_DNA"/>
</dbReference>
<dbReference type="RefSeq" id="WP_011112880.1">
    <property type="nucleotide sequence ID" value="NC_004757.1"/>
</dbReference>
<dbReference type="SMR" id="Q82SD3"/>
<dbReference type="STRING" id="228410.NE2407"/>
<dbReference type="GeneID" id="87105540"/>
<dbReference type="KEGG" id="neu:NE2407"/>
<dbReference type="eggNOG" id="ENOG5031P80">
    <property type="taxonomic scope" value="Bacteria"/>
</dbReference>
<dbReference type="HOGENOM" id="CLU_144160_1_0_4"/>
<dbReference type="OrthoDB" id="5298036at2"/>
<dbReference type="PhylomeDB" id="Q82SD3"/>
<dbReference type="Proteomes" id="UP000001416">
    <property type="component" value="Chromosome"/>
</dbReference>
<dbReference type="GO" id="GO:0005737">
    <property type="term" value="C:cytoplasm"/>
    <property type="evidence" value="ECO:0007669"/>
    <property type="project" value="UniProtKB-SubCell"/>
</dbReference>
<dbReference type="GO" id="GO:0003677">
    <property type="term" value="F:DNA binding"/>
    <property type="evidence" value="ECO:0007669"/>
    <property type="project" value="UniProtKB-UniRule"/>
</dbReference>
<dbReference type="GO" id="GO:0044780">
    <property type="term" value="P:bacterial-type flagellum assembly"/>
    <property type="evidence" value="ECO:0007669"/>
    <property type="project" value="InterPro"/>
</dbReference>
<dbReference type="GO" id="GO:0045893">
    <property type="term" value="P:positive regulation of DNA-templated transcription"/>
    <property type="evidence" value="ECO:0007669"/>
    <property type="project" value="InterPro"/>
</dbReference>
<dbReference type="GO" id="GO:1902208">
    <property type="term" value="P:regulation of bacterial-type flagellum assembly"/>
    <property type="evidence" value="ECO:0007669"/>
    <property type="project" value="UniProtKB-UniRule"/>
</dbReference>
<dbReference type="Gene3D" id="1.10.4000.10">
    <property type="entry name" value="Flagellar transcriptional activator FlhD"/>
    <property type="match status" value="1"/>
</dbReference>
<dbReference type="HAMAP" id="MF_00725">
    <property type="entry name" value="FlhD"/>
    <property type="match status" value="1"/>
</dbReference>
<dbReference type="InterPro" id="IPR023559">
    <property type="entry name" value="Flagellar_FlhD"/>
</dbReference>
<dbReference type="InterPro" id="IPR036194">
    <property type="entry name" value="FlhD_sf"/>
</dbReference>
<dbReference type="NCBIfam" id="NF002783">
    <property type="entry name" value="PRK02909.1-1"/>
    <property type="match status" value="1"/>
</dbReference>
<dbReference type="Pfam" id="PF05247">
    <property type="entry name" value="FlhD"/>
    <property type="match status" value="1"/>
</dbReference>
<dbReference type="SUPFAM" id="SSF63592">
    <property type="entry name" value="Flagellar transcriptional activator FlhD"/>
    <property type="match status" value="1"/>
</dbReference>
<accession>Q82SD3</accession>
<proteinExistence type="inferred from homology"/>
<gene>
    <name evidence="1" type="primary">flhD</name>
    <name type="ordered locus">NE2407</name>
</gene>
<comment type="function">
    <text evidence="1">Functions in complex with FlhC as a master transcriptional regulator that regulates transcription of several flagellar and non-flagellar operons by binding to their promoter region. Activates expression of class 2 flagellar genes, including fliA, which is a flagellum-specific sigma factor that turns on the class 3 genes. Also regulates genes whose products function in a variety of physiological pathways.</text>
</comment>
<comment type="subunit">
    <text evidence="1">Homodimer; disulfide-linked. Forms a heterohexamer composed of two FlhC and four FlhD subunits. Each FlhC binds a FlhD dimer, forming a heterotrimer, and a hexamer assembles by dimerization of two heterotrimers.</text>
</comment>
<comment type="subcellular location">
    <subcellularLocation>
        <location evidence="1">Cytoplasm</location>
    </subcellularLocation>
</comment>
<comment type="domain">
    <text evidence="1">The C-terminal region contains a putative helix-turn-helix (HTH) motif, suggesting that this region may bind DNA.</text>
</comment>
<comment type="similarity">
    <text evidence="1">Belongs to the FlhD family.</text>
</comment>
<keyword id="KW-0010">Activator</keyword>
<keyword id="KW-1005">Bacterial flagellum biogenesis</keyword>
<keyword id="KW-0963">Cytoplasm</keyword>
<keyword id="KW-1015">Disulfide bond</keyword>
<keyword id="KW-0238">DNA-binding</keyword>
<keyword id="KW-1185">Reference proteome</keyword>
<keyword id="KW-0804">Transcription</keyword>
<keyword id="KW-0805">Transcription regulation</keyword>
<sequence>MGTNQILDEIREVNLSYLLLAQQMLREDRIAAMYRLGIDEDIADILVKLTNSQLLKMAGSNMLLCRFRFDDSLIAEILTSHKQDRALTQSHAAILMAGLPAEKIS</sequence>
<evidence type="ECO:0000255" key="1">
    <source>
        <dbReference type="HAMAP-Rule" id="MF_00725"/>
    </source>
</evidence>